<protein>
    <recommendedName>
        <fullName>Protein swallow</fullName>
    </recommendedName>
</protein>
<accession>P40688</accession>
<accession>Q9W400</accession>
<dbReference type="EMBL" id="X56023">
    <property type="protein sequence ID" value="CAA39500.1"/>
    <property type="molecule type" value="Genomic_DNA"/>
</dbReference>
<dbReference type="EMBL" id="AE014298">
    <property type="protein sequence ID" value="AAF46160.3"/>
    <property type="molecule type" value="Genomic_DNA"/>
</dbReference>
<dbReference type="EMBL" id="AY069487">
    <property type="protein sequence ID" value="AAL39632.1"/>
    <property type="molecule type" value="mRNA"/>
</dbReference>
<dbReference type="PIR" id="S20806">
    <property type="entry name" value="S20806"/>
</dbReference>
<dbReference type="RefSeq" id="NP_511060.2">
    <property type="nucleotide sequence ID" value="NM_078505.4"/>
</dbReference>
<dbReference type="PDB" id="3BRL">
    <property type="method" value="X-ray"/>
    <property type="resolution" value="1.90 A"/>
    <property type="chains" value="C=287-296"/>
</dbReference>
<dbReference type="PDB" id="3E2B">
    <property type="method" value="X-ray"/>
    <property type="resolution" value="2.00 A"/>
    <property type="chains" value="C=281-296"/>
</dbReference>
<dbReference type="PDB" id="6XOR">
    <property type="method" value="NMR"/>
    <property type="chains" value="A/B=205-275"/>
</dbReference>
<dbReference type="PDBsum" id="3BRL"/>
<dbReference type="PDBsum" id="3E2B"/>
<dbReference type="PDBsum" id="6XOR"/>
<dbReference type="BMRB" id="P40688"/>
<dbReference type="SMR" id="P40688"/>
<dbReference type="BioGRID" id="58067">
    <property type="interactions" value="11"/>
</dbReference>
<dbReference type="DIP" id="DIP-17669N"/>
<dbReference type="ELM" id="P40688"/>
<dbReference type="FunCoup" id="P40688">
    <property type="interactions" value="19"/>
</dbReference>
<dbReference type="IntAct" id="P40688">
    <property type="interactions" value="6"/>
</dbReference>
<dbReference type="STRING" id="7227.FBpp0070884"/>
<dbReference type="iPTMnet" id="P40688"/>
<dbReference type="PaxDb" id="7227-FBpp0070884"/>
<dbReference type="ABCD" id="P40688">
    <property type="antibodies" value="13 sequenced antibodies"/>
</dbReference>
<dbReference type="DNASU" id="31580"/>
<dbReference type="EnsemblMetazoa" id="FBtr0070922">
    <property type="protein sequence ID" value="FBpp0070884"/>
    <property type="gene ID" value="FBgn0003655"/>
</dbReference>
<dbReference type="GeneID" id="31580"/>
<dbReference type="KEGG" id="dme:Dmel_CG3429"/>
<dbReference type="UCSC" id="CG3429-RA">
    <property type="organism name" value="d. melanogaster"/>
</dbReference>
<dbReference type="AGR" id="FB:FBgn0003655"/>
<dbReference type="CTD" id="31580"/>
<dbReference type="FlyBase" id="FBgn0003655">
    <property type="gene designation" value="swa"/>
</dbReference>
<dbReference type="VEuPathDB" id="VectorBase:FBgn0003655"/>
<dbReference type="eggNOG" id="ENOG502TB8W">
    <property type="taxonomic scope" value="Eukaryota"/>
</dbReference>
<dbReference type="HOGENOM" id="CLU_042201_0_0_1"/>
<dbReference type="InParanoid" id="P40688"/>
<dbReference type="OMA" id="SSCSYER"/>
<dbReference type="OrthoDB" id="8062421at2759"/>
<dbReference type="PhylomeDB" id="P40688"/>
<dbReference type="SignaLink" id="P40688"/>
<dbReference type="BioGRID-ORCS" id="31580">
    <property type="hits" value="0 hits in 1 CRISPR screen"/>
</dbReference>
<dbReference type="EvolutionaryTrace" id="P40688"/>
<dbReference type="GenomeRNAi" id="31580"/>
<dbReference type="PRO" id="PR:P40688"/>
<dbReference type="Proteomes" id="UP000000803">
    <property type="component" value="Chromosome X"/>
</dbReference>
<dbReference type="Bgee" id="FBgn0003655">
    <property type="expression patterns" value="Expressed in ovary and 24 other cell types or tissues"/>
</dbReference>
<dbReference type="ExpressionAtlas" id="P40688">
    <property type="expression patterns" value="baseline and differential"/>
</dbReference>
<dbReference type="GO" id="GO:0005634">
    <property type="term" value="C:nucleus"/>
    <property type="evidence" value="ECO:0007669"/>
    <property type="project" value="UniProtKB-SubCell"/>
</dbReference>
<dbReference type="GO" id="GO:0070840">
    <property type="term" value="F:dynein complex binding"/>
    <property type="evidence" value="ECO:0000304"/>
    <property type="project" value="FlyBase"/>
</dbReference>
<dbReference type="GO" id="GO:0003729">
    <property type="term" value="F:mRNA binding"/>
    <property type="evidence" value="ECO:0000250"/>
    <property type="project" value="FlyBase"/>
</dbReference>
<dbReference type="GO" id="GO:0007015">
    <property type="term" value="P:actin filament organization"/>
    <property type="evidence" value="ECO:0000315"/>
    <property type="project" value="FlyBase"/>
</dbReference>
<dbReference type="GO" id="GO:0008595">
    <property type="term" value="P:anterior/posterior axis specification, embryo"/>
    <property type="evidence" value="ECO:0000316"/>
    <property type="project" value="FlyBase"/>
</dbReference>
<dbReference type="GO" id="GO:0045450">
    <property type="term" value="P:bicoid mRNA localization"/>
    <property type="evidence" value="ECO:0000304"/>
    <property type="project" value="FlyBase"/>
</dbReference>
<dbReference type="GO" id="GO:0051301">
    <property type="term" value="P:cell division"/>
    <property type="evidence" value="ECO:0007669"/>
    <property type="project" value="UniProtKB-KW"/>
</dbReference>
<dbReference type="GO" id="GO:0019094">
    <property type="term" value="P:pole plasm mRNA localization"/>
    <property type="evidence" value="ECO:0000315"/>
    <property type="project" value="FlyBase"/>
</dbReference>
<dbReference type="GO" id="GO:0007317">
    <property type="term" value="P:regulation of pole plasm oskar mRNA localization"/>
    <property type="evidence" value="ECO:0000316"/>
    <property type="project" value="FlyBase"/>
</dbReference>
<proteinExistence type="evidence at protein level"/>
<name>SWA_DROME</name>
<sequence>MSLQDESFPTDELFDQLNNLSSSGARNTWFAEHHKPAVFERDTAPFLEICYADPDFDADGDVANKSAKTCVSDPVGRDQEDEDDYDEDVDGDDHKLGCEKAPLGSGRSSKAVSYQDIHSAYTKRRFQHVTSKVGQYIAEIQAQDQKRRNVKFAGFQRVNSMPESLTPTLQQVYVHDGDFKVDKNCQTHSNSDSNYNSNSNNSSSSFDRLLAENESLQQKINSLRVEAKRLQGFNEYVQERLDRKTDDFVKMKCNFETLRTELSECQQKLRRQQDNSQHHFMYHIRSATSAKATQTDFLVDTIPASGNVLVTPHPLGDLTYNSSKGSIELALLSVAPSARVAQNPVQVQRAIHPQSLDFSSVSTEADGSGSGEHRVETSSRALVRRTPAPNNSETSQPSSNDSAIEVEAHEEERPSSRRQWEQQGELISPRQWGQHEGMYYFDKRNNRVIEVMGFNISQGRNQSHDTIHNQSINDSQTRLLVHSMSMSHLEAHDHFRSKRTTLGSRMLRFLGPCVRCRNGDPLNRSNVTYKDGLPAMPEEEFVDQRNQR</sequence>
<keyword id="KW-0002">3D-structure</keyword>
<keyword id="KW-0131">Cell cycle</keyword>
<keyword id="KW-0132">Cell division</keyword>
<keyword id="KW-0217">Developmental protein</keyword>
<keyword id="KW-0498">Mitosis</keyword>
<keyword id="KW-0539">Nucleus</keyword>
<keyword id="KW-0597">Phosphoprotein</keyword>
<keyword id="KW-1185">Reference proteome</keyword>
<organism>
    <name type="scientific">Drosophila melanogaster</name>
    <name type="common">Fruit fly</name>
    <dbReference type="NCBI Taxonomy" id="7227"/>
    <lineage>
        <taxon>Eukaryota</taxon>
        <taxon>Metazoa</taxon>
        <taxon>Ecdysozoa</taxon>
        <taxon>Arthropoda</taxon>
        <taxon>Hexapoda</taxon>
        <taxon>Insecta</taxon>
        <taxon>Pterygota</taxon>
        <taxon>Neoptera</taxon>
        <taxon>Endopterygota</taxon>
        <taxon>Diptera</taxon>
        <taxon>Brachycera</taxon>
        <taxon>Muscomorpha</taxon>
        <taxon>Ephydroidea</taxon>
        <taxon>Drosophilidae</taxon>
        <taxon>Drosophila</taxon>
        <taxon>Sophophora</taxon>
    </lineage>
</organism>
<evidence type="ECO:0000256" key="1">
    <source>
        <dbReference type="SAM" id="MobiDB-lite"/>
    </source>
</evidence>
<evidence type="ECO:0000269" key="2">
    <source>
    </source>
</evidence>
<evidence type="ECO:0000269" key="3">
    <source>
    </source>
</evidence>
<evidence type="ECO:0000269" key="4">
    <source>
    </source>
</evidence>
<evidence type="ECO:0007829" key="5">
    <source>
        <dbReference type="PDB" id="3BRL"/>
    </source>
</evidence>
<evidence type="ECO:0007829" key="6">
    <source>
        <dbReference type="PDB" id="6XOR"/>
    </source>
</evidence>
<reference key="1">
    <citation type="journal article" date="1991" name="Dev. Genet.">
        <title>Sequence of swallow, a gene required for the localization of bicoid message in Drosophila eggs.</title>
        <authorList>
            <person name="Chao Y.-C."/>
            <person name="Donahue K.M."/>
            <person name="Pokrywka N.J."/>
            <person name="Stephenson E.C."/>
        </authorList>
    </citation>
    <scope>NUCLEOTIDE SEQUENCE</scope>
    <scope>FUNCTION</scope>
    <scope>SUBUNIT</scope>
    <scope>SUBCELLULAR LOCATION</scope>
    <scope>DEVELOPMENTAL STAGE</scope>
    <source>
        <strain>Canton-S</strain>
    </source>
</reference>
<reference key="2">
    <citation type="journal article" date="2000" name="Science">
        <title>The genome sequence of Drosophila melanogaster.</title>
        <authorList>
            <person name="Adams M.D."/>
            <person name="Celniker S.E."/>
            <person name="Holt R.A."/>
            <person name="Evans C.A."/>
            <person name="Gocayne J.D."/>
            <person name="Amanatides P.G."/>
            <person name="Scherer S.E."/>
            <person name="Li P.W."/>
            <person name="Hoskins R.A."/>
            <person name="Galle R.F."/>
            <person name="George R.A."/>
            <person name="Lewis S.E."/>
            <person name="Richards S."/>
            <person name="Ashburner M."/>
            <person name="Henderson S.N."/>
            <person name="Sutton G.G."/>
            <person name="Wortman J.R."/>
            <person name="Yandell M.D."/>
            <person name="Zhang Q."/>
            <person name="Chen L.X."/>
            <person name="Brandon R.C."/>
            <person name="Rogers Y.-H.C."/>
            <person name="Blazej R.G."/>
            <person name="Champe M."/>
            <person name="Pfeiffer B.D."/>
            <person name="Wan K.H."/>
            <person name="Doyle C."/>
            <person name="Baxter E.G."/>
            <person name="Helt G."/>
            <person name="Nelson C.R."/>
            <person name="Miklos G.L.G."/>
            <person name="Abril J.F."/>
            <person name="Agbayani A."/>
            <person name="An H.-J."/>
            <person name="Andrews-Pfannkoch C."/>
            <person name="Baldwin D."/>
            <person name="Ballew R.M."/>
            <person name="Basu A."/>
            <person name="Baxendale J."/>
            <person name="Bayraktaroglu L."/>
            <person name="Beasley E.M."/>
            <person name="Beeson K.Y."/>
            <person name="Benos P.V."/>
            <person name="Berman B.P."/>
            <person name="Bhandari D."/>
            <person name="Bolshakov S."/>
            <person name="Borkova D."/>
            <person name="Botchan M.R."/>
            <person name="Bouck J."/>
            <person name="Brokstein P."/>
            <person name="Brottier P."/>
            <person name="Burtis K.C."/>
            <person name="Busam D.A."/>
            <person name="Butler H."/>
            <person name="Cadieu E."/>
            <person name="Center A."/>
            <person name="Chandra I."/>
            <person name="Cherry J.M."/>
            <person name="Cawley S."/>
            <person name="Dahlke C."/>
            <person name="Davenport L.B."/>
            <person name="Davies P."/>
            <person name="de Pablos B."/>
            <person name="Delcher A."/>
            <person name="Deng Z."/>
            <person name="Mays A.D."/>
            <person name="Dew I."/>
            <person name="Dietz S.M."/>
            <person name="Dodson K."/>
            <person name="Doup L.E."/>
            <person name="Downes M."/>
            <person name="Dugan-Rocha S."/>
            <person name="Dunkov B.C."/>
            <person name="Dunn P."/>
            <person name="Durbin K.J."/>
            <person name="Evangelista C.C."/>
            <person name="Ferraz C."/>
            <person name="Ferriera S."/>
            <person name="Fleischmann W."/>
            <person name="Fosler C."/>
            <person name="Gabrielian A.E."/>
            <person name="Garg N.S."/>
            <person name="Gelbart W.M."/>
            <person name="Glasser K."/>
            <person name="Glodek A."/>
            <person name="Gong F."/>
            <person name="Gorrell J.H."/>
            <person name="Gu Z."/>
            <person name="Guan P."/>
            <person name="Harris M."/>
            <person name="Harris N.L."/>
            <person name="Harvey D.A."/>
            <person name="Heiman T.J."/>
            <person name="Hernandez J.R."/>
            <person name="Houck J."/>
            <person name="Hostin D."/>
            <person name="Houston K.A."/>
            <person name="Howland T.J."/>
            <person name="Wei M.-H."/>
            <person name="Ibegwam C."/>
            <person name="Jalali M."/>
            <person name="Kalush F."/>
            <person name="Karpen G.H."/>
            <person name="Ke Z."/>
            <person name="Kennison J.A."/>
            <person name="Ketchum K.A."/>
            <person name="Kimmel B.E."/>
            <person name="Kodira C.D."/>
            <person name="Kraft C.L."/>
            <person name="Kravitz S."/>
            <person name="Kulp D."/>
            <person name="Lai Z."/>
            <person name="Lasko P."/>
            <person name="Lei Y."/>
            <person name="Levitsky A.A."/>
            <person name="Li J.H."/>
            <person name="Li Z."/>
            <person name="Liang Y."/>
            <person name="Lin X."/>
            <person name="Liu X."/>
            <person name="Mattei B."/>
            <person name="McIntosh T.C."/>
            <person name="McLeod M.P."/>
            <person name="McPherson D."/>
            <person name="Merkulov G."/>
            <person name="Milshina N.V."/>
            <person name="Mobarry C."/>
            <person name="Morris J."/>
            <person name="Moshrefi A."/>
            <person name="Mount S.M."/>
            <person name="Moy M."/>
            <person name="Murphy B."/>
            <person name="Murphy L."/>
            <person name="Muzny D.M."/>
            <person name="Nelson D.L."/>
            <person name="Nelson D.R."/>
            <person name="Nelson K.A."/>
            <person name="Nixon K."/>
            <person name="Nusskern D.R."/>
            <person name="Pacleb J.M."/>
            <person name="Palazzolo M."/>
            <person name="Pittman G.S."/>
            <person name="Pan S."/>
            <person name="Pollard J."/>
            <person name="Puri V."/>
            <person name="Reese M.G."/>
            <person name="Reinert K."/>
            <person name="Remington K."/>
            <person name="Saunders R.D.C."/>
            <person name="Scheeler F."/>
            <person name="Shen H."/>
            <person name="Shue B.C."/>
            <person name="Siden-Kiamos I."/>
            <person name="Simpson M."/>
            <person name="Skupski M.P."/>
            <person name="Smith T.J."/>
            <person name="Spier E."/>
            <person name="Spradling A.C."/>
            <person name="Stapleton M."/>
            <person name="Strong R."/>
            <person name="Sun E."/>
            <person name="Svirskas R."/>
            <person name="Tector C."/>
            <person name="Turner R."/>
            <person name="Venter E."/>
            <person name="Wang A.H."/>
            <person name="Wang X."/>
            <person name="Wang Z.-Y."/>
            <person name="Wassarman D.A."/>
            <person name="Weinstock G.M."/>
            <person name="Weissenbach J."/>
            <person name="Williams S.M."/>
            <person name="Woodage T."/>
            <person name="Worley K.C."/>
            <person name="Wu D."/>
            <person name="Yang S."/>
            <person name="Yao Q.A."/>
            <person name="Ye J."/>
            <person name="Yeh R.-F."/>
            <person name="Zaveri J.S."/>
            <person name="Zhan M."/>
            <person name="Zhang G."/>
            <person name="Zhao Q."/>
            <person name="Zheng L."/>
            <person name="Zheng X.H."/>
            <person name="Zhong F.N."/>
            <person name="Zhong W."/>
            <person name="Zhou X."/>
            <person name="Zhu S.C."/>
            <person name="Zhu X."/>
            <person name="Smith H.O."/>
            <person name="Gibbs R.A."/>
            <person name="Myers E.W."/>
            <person name="Rubin G.M."/>
            <person name="Venter J.C."/>
        </authorList>
    </citation>
    <scope>NUCLEOTIDE SEQUENCE [LARGE SCALE GENOMIC DNA]</scope>
    <source>
        <strain>Berkeley</strain>
    </source>
</reference>
<reference key="3">
    <citation type="journal article" date="2002" name="Genome Biol.">
        <title>Annotation of the Drosophila melanogaster euchromatic genome: a systematic review.</title>
        <authorList>
            <person name="Misra S."/>
            <person name="Crosby M.A."/>
            <person name="Mungall C.J."/>
            <person name="Matthews B.B."/>
            <person name="Campbell K.S."/>
            <person name="Hradecky P."/>
            <person name="Huang Y."/>
            <person name="Kaminker J.S."/>
            <person name="Millburn G.H."/>
            <person name="Prochnik S.E."/>
            <person name="Smith C.D."/>
            <person name="Tupy J.L."/>
            <person name="Whitfield E.J."/>
            <person name="Bayraktaroglu L."/>
            <person name="Berman B.P."/>
            <person name="Bettencourt B.R."/>
            <person name="Celniker S.E."/>
            <person name="de Grey A.D.N.J."/>
            <person name="Drysdale R.A."/>
            <person name="Harris N.L."/>
            <person name="Richter J."/>
            <person name="Russo S."/>
            <person name="Schroeder A.J."/>
            <person name="Shu S.Q."/>
            <person name="Stapleton M."/>
            <person name="Yamada C."/>
            <person name="Ashburner M."/>
            <person name="Gelbart W.M."/>
            <person name="Rubin G.M."/>
            <person name="Lewis S.E."/>
        </authorList>
    </citation>
    <scope>GENOME REANNOTATION</scope>
    <source>
        <strain>Berkeley</strain>
    </source>
</reference>
<reference key="4">
    <citation type="journal article" date="2002" name="Genome Biol.">
        <title>A Drosophila full-length cDNA resource.</title>
        <authorList>
            <person name="Stapleton M."/>
            <person name="Carlson J.W."/>
            <person name="Brokstein P."/>
            <person name="Yu C."/>
            <person name="Champe M."/>
            <person name="George R.A."/>
            <person name="Guarin H."/>
            <person name="Kronmiller B."/>
            <person name="Pacleb J.M."/>
            <person name="Park S."/>
            <person name="Wan K.H."/>
            <person name="Rubin G.M."/>
            <person name="Celniker S.E."/>
        </authorList>
    </citation>
    <scope>NUCLEOTIDE SEQUENCE [LARGE SCALE MRNA]</scope>
    <source>
        <strain>Berkeley</strain>
        <tissue>Embryo</tissue>
    </source>
</reference>
<reference key="5">
    <citation type="journal article" date="1993" name="Development">
        <title>Distribution of swallow protein in egg chambers and embryos of Drosophila melanogaster.</title>
        <authorList>
            <person name="Hegde J."/>
            <person name="Stephenson E.C."/>
        </authorList>
    </citation>
    <scope>SUBCELLULAR LOCATION</scope>
</reference>
<reference key="6">
    <citation type="journal article" date="2008" name="J. Proteome Res.">
        <title>Phosphoproteome analysis of Drosophila melanogaster embryos.</title>
        <authorList>
            <person name="Zhai B."/>
            <person name="Villen J."/>
            <person name="Beausoleil S.A."/>
            <person name="Mintseris J."/>
            <person name="Gygi S.P."/>
        </authorList>
    </citation>
    <scope>PHOSPHORYLATION [LARGE SCALE ANALYSIS] AT SER-362; SER-368; SER-463; SER-471; SER-475; SER-483; SER-485 AND SER-487</scope>
    <scope>IDENTIFICATION BY MASS SPECTROMETRY</scope>
    <source>
        <tissue>Embryo</tissue>
    </source>
</reference>
<gene>
    <name type="primary">swa</name>
    <name type="ORF">CG3429</name>
</gene>
<comment type="function">
    <text evidence="2">Has a role in localizing bicoid mRNA at the anterior margin of the oocyte during oogenesis, and a poorly characterized role in nuclear divisions in early embryogenesis.</text>
</comment>
<comment type="subunit">
    <text evidence="2">May be a homo- or heterodimer.</text>
</comment>
<comment type="subcellular location">
    <subcellularLocation>
        <location evidence="2 4">Nucleus</location>
    </subcellularLocation>
    <text>Uniformly distributed in eggs, becomes localized to the nuclei during early mitotic divisions in early embryogenesis. Enters each nucleus at the beginning of mitosis, occupies a position complementary to that of condensed chromatin, and leaves each nucleus at the end of mitosis.</text>
</comment>
<comment type="developmental stage">
    <text evidence="2">Expressed both maternally and zygotically.</text>
</comment>
<feature type="chain" id="PRO_0000072342" description="Protein swallow">
    <location>
        <begin position="1"/>
        <end position="548"/>
    </location>
</feature>
<feature type="region of interest" description="Disordered" evidence="1">
    <location>
        <begin position="67"/>
        <end position="109"/>
    </location>
</feature>
<feature type="region of interest" description="Disordered" evidence="1">
    <location>
        <begin position="184"/>
        <end position="206"/>
    </location>
</feature>
<feature type="region of interest" description="Disordered" evidence="1">
    <location>
        <begin position="358"/>
        <end position="428"/>
    </location>
</feature>
<feature type="compositionally biased region" description="Acidic residues" evidence="1">
    <location>
        <begin position="79"/>
        <end position="91"/>
    </location>
</feature>
<feature type="compositionally biased region" description="Low complexity" evidence="1">
    <location>
        <begin position="189"/>
        <end position="205"/>
    </location>
</feature>
<feature type="compositionally biased region" description="Polar residues" evidence="1">
    <location>
        <begin position="388"/>
        <end position="402"/>
    </location>
</feature>
<feature type="compositionally biased region" description="Basic and acidic residues" evidence="1">
    <location>
        <begin position="406"/>
        <end position="420"/>
    </location>
</feature>
<feature type="modified residue" description="Phosphoserine" evidence="3">
    <location>
        <position position="362"/>
    </location>
</feature>
<feature type="modified residue" description="Phosphoserine" evidence="3">
    <location>
        <position position="368"/>
    </location>
</feature>
<feature type="modified residue" description="Phosphoserine" evidence="3">
    <location>
        <position position="463"/>
    </location>
</feature>
<feature type="modified residue" description="Phosphoserine" evidence="3">
    <location>
        <position position="471"/>
    </location>
</feature>
<feature type="modified residue" description="Phosphoserine" evidence="3">
    <location>
        <position position="475"/>
    </location>
</feature>
<feature type="modified residue" description="Phosphoserine" evidence="3">
    <location>
        <position position="483"/>
    </location>
</feature>
<feature type="modified residue" description="Phosphoserine" evidence="3">
    <location>
        <position position="485"/>
    </location>
</feature>
<feature type="modified residue" description="Phosphoserine" evidence="3">
    <location>
        <position position="487"/>
    </location>
</feature>
<feature type="helix" evidence="6">
    <location>
        <begin position="207"/>
        <end position="269"/>
    </location>
</feature>
<feature type="strand" evidence="5">
    <location>
        <begin position="288"/>
        <end position="294"/>
    </location>
</feature>